<feature type="signal peptide" evidence="2 3">
    <location>
        <begin position="1"/>
        <end position="23"/>
    </location>
</feature>
<feature type="chain" id="PRO_0000022068" description="Phospholipase A2 inhibitor">
    <location>
        <begin position="24"/>
        <end position="331"/>
    </location>
</feature>
<feature type="repeat" description="LRR 1" evidence="1">
    <location>
        <begin position="78"/>
        <end position="101"/>
    </location>
</feature>
<feature type="repeat" description="LRR 2" evidence="1">
    <location>
        <begin position="103"/>
        <end position="125"/>
    </location>
</feature>
<feature type="repeat" description="LRR 3" evidence="1">
    <location>
        <begin position="127"/>
        <end position="149"/>
    </location>
</feature>
<feature type="repeat" description="LRR 4" evidence="1">
    <location>
        <begin position="150"/>
        <end position="173"/>
    </location>
</feature>
<feature type="repeat" description="LRR 5" evidence="1">
    <location>
        <begin position="175"/>
        <end position="197"/>
    </location>
</feature>
<feature type="repeat" description="LRR 6" evidence="1">
    <location>
        <begin position="199"/>
        <end position="221"/>
    </location>
</feature>
<feature type="repeat" description="LRR 7" evidence="1">
    <location>
        <begin position="223"/>
        <end position="244"/>
    </location>
</feature>
<feature type="repeat" description="LRR 8" evidence="1">
    <location>
        <begin position="245"/>
        <end position="268"/>
    </location>
</feature>
<feature type="domain" description="LRRCT" evidence="1">
    <location>
        <begin position="279"/>
        <end position="330"/>
    </location>
</feature>
<feature type="glycosylation site" description="N-linked (GlcNAc...) asparagine" evidence="1">
    <location>
        <position position="35"/>
    </location>
</feature>
<feature type="glycosylation site" description="N-linked (GlcNAc...) asparagine" evidence="1">
    <location>
        <position position="125"/>
    </location>
</feature>
<feature type="glycosylation site" description="N-linked (GlcNAc...) asparagine" evidence="1">
    <location>
        <position position="232"/>
    </location>
</feature>
<feature type="glycosylation site" description="N-linked (GlcNAc...) asparagine" evidence="1">
    <location>
        <position position="271"/>
    </location>
</feature>
<feature type="sequence conflict" description="In Ref. 2; AA sequence." evidence="4" ref="2">
    <original>S</original>
    <variation>L</variation>
    <location>
        <position position="45"/>
    </location>
</feature>
<comment type="function">
    <text evidence="2">Inhibits the enzymatic activity of the basic phospholipase A2 (PLA2).</text>
</comment>
<comment type="subunit">
    <text evidence="2">Homotrimer.</text>
</comment>
<comment type="subcellular location">
    <subcellularLocation>
        <location evidence="2">Secreted</location>
    </subcellularLocation>
    <text evidence="2">Secreted in plasma.</text>
</comment>
<comment type="mass spectrometry" mass="43857.2" error="81.9" method="MALDI" evidence="3"/>
<comment type="similarity">
    <text evidence="4">Belongs to the beta-type phospholipase A2 inhibitor family.</text>
</comment>
<reference key="1">
    <citation type="journal article" date="1998" name="J. Biol. Chem.">
        <title>A novel phospholipase A2 inhibitor with leucine-rich repeats from the blood plasma of Agkistrodon blomhoffii siniticus. Sequence homologies with human leucine-rich alpha2-glycoprotein.</title>
        <authorList>
            <person name="Okumura K."/>
            <person name="Ohkura N."/>
            <person name="Inoue S."/>
            <person name="Ikeda K."/>
            <person name="Hayashi K."/>
        </authorList>
    </citation>
    <scope>NUCLEOTIDE SEQUENCE [MRNA]</scope>
    <scope>PROTEIN SEQUENCE OF 24-53; 59-87; 93-105; 165-173; 177-195; 204-219; 225-230; 305-313 AND 317-330</scope>
    <scope>MASS SPECTROMETRY</scope>
    <source>
        <tissue>Liver</tissue>
    </source>
</reference>
<reference key="2">
    <citation type="journal article" date="1997" name="Biochem. J.">
        <title>Purification and characterization of three distinct types of phospholipase A2 inhibitors from the blood plasma of the Chinese mamushi, Agkistrodon blomhoffii siniticus.</title>
        <authorList>
            <person name="Ohkura N."/>
            <person name="Okuhara H."/>
            <person name="Inoue S."/>
            <person name="Ikeda K."/>
            <person name="Hayashi K."/>
        </authorList>
    </citation>
    <scope>PROTEIN SEQUENCE OF 24-53</scope>
    <scope>FUNCTION</scope>
    <scope>SUBCELLULAR LOCATION</scope>
    <scope>SUBUNIT</scope>
    <source>
        <tissue>Plasma</tissue>
    </source>
</reference>
<sequence length="331" mass="37092">MKSSVPSLLIACLVMSLNSYTQQVLYCPPTPAPENVTEFVCNSPSLHEFPTGFPARAKMISVEFTQVSSLGVEALQGLPNLQELHLSNNRLKTLPSGLFRNLPQLHTLDLSTNHLEDLPPEIFTNASSLILLPLSENQLAELHPSWFQTLGELRILGLDHNQVKEIPISCFDKLKKLTSLDLSFNLLRRLAPEMFSGLDNLEKLILESNPIQCIVGRTFHWHPKLTVLSLKNSSLTNIMGFFQPLEQLELLDLSDNELTTMEPPVYKTSANLSLDLSGNPWACDCRLDNLLTWVNEHNIHLYSKEEIVCASPKHFKGECATSLHKSQICPC</sequence>
<evidence type="ECO:0000255" key="1"/>
<evidence type="ECO:0000269" key="2">
    <source>
    </source>
</evidence>
<evidence type="ECO:0000269" key="3">
    <source>
    </source>
</evidence>
<evidence type="ECO:0000305" key="4"/>
<dbReference type="EMBL" id="AB007198">
    <property type="protein sequence ID" value="BAA31994.1"/>
    <property type="molecule type" value="mRNA"/>
</dbReference>
<dbReference type="SMR" id="O93233"/>
<dbReference type="GO" id="GO:0005576">
    <property type="term" value="C:extracellular region"/>
    <property type="evidence" value="ECO:0007669"/>
    <property type="project" value="UniProtKB-SubCell"/>
</dbReference>
<dbReference type="GO" id="GO:0019834">
    <property type="term" value="F:phospholipase A2 inhibitor activity"/>
    <property type="evidence" value="ECO:0007669"/>
    <property type="project" value="UniProtKB-KW"/>
</dbReference>
<dbReference type="Gene3D" id="3.80.10.10">
    <property type="entry name" value="Ribonuclease Inhibitor"/>
    <property type="match status" value="3"/>
</dbReference>
<dbReference type="InterPro" id="IPR000483">
    <property type="entry name" value="Cys-rich_flank_reg_C"/>
</dbReference>
<dbReference type="InterPro" id="IPR001611">
    <property type="entry name" value="Leu-rich_rpt"/>
</dbReference>
<dbReference type="InterPro" id="IPR003591">
    <property type="entry name" value="Leu-rich_rpt_typical-subtyp"/>
</dbReference>
<dbReference type="InterPro" id="IPR032675">
    <property type="entry name" value="LRR_dom_sf"/>
</dbReference>
<dbReference type="PANTHER" id="PTHR24366">
    <property type="entry name" value="IG(IMMUNOGLOBULIN) AND LRR(LEUCINE RICH REPEAT) DOMAINS"/>
    <property type="match status" value="1"/>
</dbReference>
<dbReference type="PANTHER" id="PTHR24366:SF96">
    <property type="entry name" value="LEUCINE RICH REPEAT CONTAINING 53"/>
    <property type="match status" value="1"/>
</dbReference>
<dbReference type="Pfam" id="PF13855">
    <property type="entry name" value="LRR_8"/>
    <property type="match status" value="3"/>
</dbReference>
<dbReference type="PRINTS" id="PR00019">
    <property type="entry name" value="LEURICHRPT"/>
</dbReference>
<dbReference type="SMART" id="SM00364">
    <property type="entry name" value="LRR_BAC"/>
    <property type="match status" value="3"/>
</dbReference>
<dbReference type="SMART" id="SM00365">
    <property type="entry name" value="LRR_SD22"/>
    <property type="match status" value="3"/>
</dbReference>
<dbReference type="SMART" id="SM00369">
    <property type="entry name" value="LRR_TYP"/>
    <property type="match status" value="7"/>
</dbReference>
<dbReference type="SMART" id="SM00082">
    <property type="entry name" value="LRRCT"/>
    <property type="match status" value="1"/>
</dbReference>
<dbReference type="SUPFAM" id="SSF52058">
    <property type="entry name" value="L domain-like"/>
    <property type="match status" value="1"/>
</dbReference>
<dbReference type="PROSITE" id="PS51450">
    <property type="entry name" value="LRR"/>
    <property type="match status" value="9"/>
</dbReference>
<protein>
    <recommendedName>
        <fullName>Phospholipase A2 inhibitor</fullName>
        <shortName>beta-PLI</shortName>
    </recommendedName>
</protein>
<accession>O93233</accession>
<organism>
    <name type="scientific">Gloydius brevicaudus siniticus</name>
    <name type="common">Chinese mamushi</name>
    <name type="synonym">Agkistrodon blomhoffii siniticus</name>
    <dbReference type="NCBI Taxonomy" id="31147"/>
    <lineage>
        <taxon>Eukaryota</taxon>
        <taxon>Metazoa</taxon>
        <taxon>Chordata</taxon>
        <taxon>Craniata</taxon>
        <taxon>Vertebrata</taxon>
        <taxon>Euteleostomi</taxon>
        <taxon>Lepidosauria</taxon>
        <taxon>Squamata</taxon>
        <taxon>Bifurcata</taxon>
        <taxon>Unidentata</taxon>
        <taxon>Episquamata</taxon>
        <taxon>Toxicofera</taxon>
        <taxon>Serpentes</taxon>
        <taxon>Colubroidea</taxon>
        <taxon>Viperidae</taxon>
        <taxon>Crotalinae</taxon>
        <taxon>Gloydius</taxon>
        <taxon>Gloydius brevicauda</taxon>
    </lineage>
</organism>
<proteinExistence type="evidence at protein level"/>
<name>PLIB_GLOBS</name>
<keyword id="KW-0903">Direct protein sequencing</keyword>
<keyword id="KW-0325">Glycoprotein</keyword>
<keyword id="KW-0433">Leucine-rich repeat</keyword>
<keyword id="KW-0593">Phospholipase A2 inhibitor</keyword>
<keyword id="KW-0677">Repeat</keyword>
<keyword id="KW-0964">Secreted</keyword>
<keyword id="KW-0732">Signal</keyword>